<reference evidence="4 5" key="1">
    <citation type="journal article" date="2006" name="EMBO J.">
        <title>The orphan receptor GPR17 identified as a new dual uracil nucleotides/cysteinyl-leukotrienes receptor.</title>
        <authorList>
            <person name="Ciana P."/>
            <person name="Fumagalli M."/>
            <person name="Trincavelli M.L."/>
            <person name="Verderio C."/>
            <person name="Rosa P."/>
            <person name="Lecca D."/>
            <person name="Ferrario S."/>
            <person name="Parravicini C."/>
            <person name="Capra V."/>
            <person name="Gelosa P."/>
            <person name="Guerrini U."/>
            <person name="Belcredito S."/>
            <person name="Cimino M."/>
            <person name="Sironi L."/>
            <person name="Tremoli E."/>
            <person name="Rovati G.E."/>
            <person name="Martini C."/>
            <person name="Abbracchio M.P."/>
        </authorList>
    </citation>
    <scope>NUCLEOTIDE SEQUENCE [MRNA]</scope>
    <scope>FUNCTION</scope>
    <scope>TISSUE SPECIFICITY</scope>
    <scope>INDUCTION</scope>
    <source>
        <strain evidence="5">Sprague-Dawley</strain>
        <tissue evidence="5">Brain</tissue>
    </source>
</reference>
<name>GPR17_RAT</name>
<sequence length="339" mass="37870">MDGLETALPSLTDNASLAYSEQCGQETPLENMLFACFYLLDFILAFVGNALALWLFIWDHKSGTPANVFLMHLAVADLSCVLVLPTRLVYHFSGNHWPFGEIPCRLTGFLFYLNMYASIYFLTCISADRFLAIVHPVKSLKLRRPLYAHLACAFLWIVVAVAMAPLLVSPQTVQTNHTVVCLQLYREKASHHALASLAVAFTFPFITTVTCYLLIIRSLRQGPRIEKHLKNKAVRMIAMVLAIFLICFVPYHIHRSVYVLHYRGGGTSCSAQRALALGNRITSCLTSLNGALDPVMYFFVAEKFRHALCNLLCSKRLTGPPPSFEGKTNESSLSARSEL</sequence>
<feature type="chain" id="PRO_0000278172" description="Uracil nucleotide/cysteinyl leukotriene receptor">
    <location>
        <begin position="1"/>
        <end position="339"/>
    </location>
</feature>
<feature type="topological domain" description="Extracellular" evidence="1">
    <location>
        <begin position="1"/>
        <end position="36"/>
    </location>
</feature>
<feature type="transmembrane region" description="Helical; Name=1" evidence="1">
    <location>
        <begin position="37"/>
        <end position="57"/>
    </location>
</feature>
<feature type="topological domain" description="Cytoplasmic" evidence="1">
    <location>
        <begin position="58"/>
        <end position="64"/>
    </location>
</feature>
<feature type="transmembrane region" description="Helical; Name=2" evidence="1">
    <location>
        <begin position="65"/>
        <end position="85"/>
    </location>
</feature>
<feature type="topological domain" description="Extracellular" evidence="1">
    <location>
        <begin position="86"/>
        <end position="105"/>
    </location>
</feature>
<feature type="transmembrane region" description="Helical; Name=3" evidence="1">
    <location>
        <begin position="106"/>
        <end position="126"/>
    </location>
</feature>
<feature type="topological domain" description="Cytoplasmic" evidence="1">
    <location>
        <begin position="127"/>
        <end position="147"/>
    </location>
</feature>
<feature type="transmembrane region" description="Helical; Name=4" evidence="1">
    <location>
        <begin position="148"/>
        <end position="168"/>
    </location>
</feature>
<feature type="topological domain" description="Extracellular" evidence="1">
    <location>
        <begin position="169"/>
        <end position="195"/>
    </location>
</feature>
<feature type="transmembrane region" description="Helical; Name=5" evidence="1">
    <location>
        <begin position="196"/>
        <end position="216"/>
    </location>
</feature>
<feature type="topological domain" description="Cytoplasmic" evidence="1">
    <location>
        <begin position="217"/>
        <end position="232"/>
    </location>
</feature>
<feature type="transmembrane region" description="Helical; Name=6" evidence="1">
    <location>
        <begin position="233"/>
        <end position="253"/>
    </location>
</feature>
<feature type="topological domain" description="Extracellular" evidence="1">
    <location>
        <begin position="254"/>
        <end position="280"/>
    </location>
</feature>
<feature type="transmembrane region" description="Helical; Name=7" evidence="1">
    <location>
        <begin position="281"/>
        <end position="301"/>
    </location>
</feature>
<feature type="topological domain" description="Cytoplasmic" evidence="1">
    <location>
        <begin position="302"/>
        <end position="339"/>
    </location>
</feature>
<feature type="glycosylation site" description="N-linked (GlcNAc...) asparagine" evidence="1">
    <location>
        <position position="14"/>
    </location>
</feature>
<feature type="glycosylation site" description="N-linked (GlcNAc...) asparagine" evidence="1">
    <location>
        <position position="176"/>
    </location>
</feature>
<feature type="disulfide bond" evidence="2">
    <location>
        <begin position="104"/>
        <end position="181"/>
    </location>
</feature>
<evidence type="ECO:0000255" key="1"/>
<evidence type="ECO:0000255" key="2">
    <source>
        <dbReference type="PROSITE-ProRule" id="PRU00521"/>
    </source>
</evidence>
<evidence type="ECO:0000269" key="3">
    <source>
    </source>
</evidence>
<evidence type="ECO:0000305" key="4"/>
<evidence type="ECO:0000312" key="5">
    <source>
        <dbReference type="EMBL" id="ABG75921.1"/>
    </source>
</evidence>
<evidence type="ECO:0000312" key="6">
    <source>
        <dbReference type="RGD" id="1589785"/>
    </source>
</evidence>
<proteinExistence type="evidence at transcript level"/>
<keyword id="KW-1003">Cell membrane</keyword>
<keyword id="KW-1015">Disulfide bond</keyword>
<keyword id="KW-0297">G-protein coupled receptor</keyword>
<keyword id="KW-0325">Glycoprotein</keyword>
<keyword id="KW-0472">Membrane</keyword>
<keyword id="KW-0675">Receptor</keyword>
<keyword id="KW-1185">Reference proteome</keyword>
<keyword id="KW-0807">Transducer</keyword>
<keyword id="KW-0812">Transmembrane</keyword>
<keyword id="KW-1133">Transmembrane helix</keyword>
<protein>
    <recommendedName>
        <fullName>Uracil nucleotide/cysteinyl leukotriene receptor</fullName>
        <shortName>UDP/CysLT receptor</shortName>
    </recommendedName>
    <alternativeName>
        <fullName>G-protein coupled receptor 17</fullName>
    </alternativeName>
</protein>
<organism>
    <name type="scientific">Rattus norvegicus</name>
    <name type="common">Rat</name>
    <dbReference type="NCBI Taxonomy" id="10116"/>
    <lineage>
        <taxon>Eukaryota</taxon>
        <taxon>Metazoa</taxon>
        <taxon>Chordata</taxon>
        <taxon>Craniata</taxon>
        <taxon>Vertebrata</taxon>
        <taxon>Euteleostomi</taxon>
        <taxon>Mammalia</taxon>
        <taxon>Eutheria</taxon>
        <taxon>Euarchontoglires</taxon>
        <taxon>Glires</taxon>
        <taxon>Rodentia</taxon>
        <taxon>Myomorpha</taxon>
        <taxon>Muroidea</taxon>
        <taxon>Muridae</taxon>
        <taxon>Murinae</taxon>
        <taxon>Rattus</taxon>
    </lineage>
</organism>
<dbReference type="EMBL" id="DQ777767">
    <property type="protein sequence ID" value="ABG75921.1"/>
    <property type="molecule type" value="mRNA"/>
</dbReference>
<dbReference type="RefSeq" id="NP_001065245.1">
    <property type="nucleotide sequence ID" value="NM_001071777.2"/>
</dbReference>
<dbReference type="RefSeq" id="XP_006254666.1">
    <property type="nucleotide sequence ID" value="XM_006254604.3"/>
</dbReference>
<dbReference type="SMR" id="Q09QM4"/>
<dbReference type="FunCoup" id="Q09QM4">
    <property type="interactions" value="208"/>
</dbReference>
<dbReference type="STRING" id="10116.ENSRNOP00000032046"/>
<dbReference type="BindingDB" id="Q09QM4"/>
<dbReference type="ChEMBL" id="CHEMBL4295807"/>
<dbReference type="GlyCosmos" id="Q09QM4">
    <property type="glycosylation" value="2 sites, No reported glycans"/>
</dbReference>
<dbReference type="GlyGen" id="Q09QM4">
    <property type="glycosylation" value="2 sites"/>
</dbReference>
<dbReference type="PhosphoSitePlus" id="Q09QM4"/>
<dbReference type="PaxDb" id="10116-ENSRNOP00000032046"/>
<dbReference type="Ensembl" id="ENSRNOT00000104846.1">
    <property type="protein sequence ID" value="ENSRNOP00000091710.1"/>
    <property type="gene ID" value="ENSRNOG00000065480.1"/>
</dbReference>
<dbReference type="GeneID" id="767613"/>
<dbReference type="KEGG" id="rno:767613"/>
<dbReference type="UCSC" id="RGD:1589785">
    <property type="organism name" value="rat"/>
</dbReference>
<dbReference type="AGR" id="RGD:1589785"/>
<dbReference type="CTD" id="2840"/>
<dbReference type="RGD" id="1589785">
    <property type="gene designation" value="Gpr17"/>
</dbReference>
<dbReference type="eggNOG" id="ENOG502QW6S">
    <property type="taxonomic scope" value="Eukaryota"/>
</dbReference>
<dbReference type="GeneTree" id="ENSGT01130000278275"/>
<dbReference type="HOGENOM" id="CLU_009579_8_2_1"/>
<dbReference type="InParanoid" id="Q09QM4"/>
<dbReference type="OMA" id="TCLNGAM"/>
<dbReference type="OrthoDB" id="6503655at2759"/>
<dbReference type="PhylomeDB" id="Q09QM4"/>
<dbReference type="TreeFam" id="TF330775"/>
<dbReference type="Reactome" id="R-RNO-391906">
    <property type="pathway name" value="Leukotriene receptors"/>
</dbReference>
<dbReference type="Reactome" id="R-RNO-416476">
    <property type="pathway name" value="G alpha (q) signalling events"/>
</dbReference>
<dbReference type="Reactome" id="R-RNO-417957">
    <property type="pathway name" value="P2Y receptors"/>
</dbReference>
<dbReference type="Reactome" id="R-RNO-418594">
    <property type="pathway name" value="G alpha (i) signalling events"/>
</dbReference>
<dbReference type="PRO" id="PR:Q09QM4"/>
<dbReference type="Proteomes" id="UP000002494">
    <property type="component" value="Chromosome 18"/>
</dbReference>
<dbReference type="Bgee" id="ENSRNOG00000025745">
    <property type="expression patterns" value="Expressed in frontal cortex and 13 other cell types or tissues"/>
</dbReference>
<dbReference type="GO" id="GO:0005886">
    <property type="term" value="C:plasma membrane"/>
    <property type="evidence" value="ECO:0000318"/>
    <property type="project" value="GO_Central"/>
</dbReference>
<dbReference type="GO" id="GO:0004930">
    <property type="term" value="F:G protein-coupled receptor activity"/>
    <property type="evidence" value="ECO:0000318"/>
    <property type="project" value="GO_Central"/>
</dbReference>
<dbReference type="GO" id="GO:0033612">
    <property type="term" value="F:receptor serine/threonine kinase binding"/>
    <property type="evidence" value="ECO:0000353"/>
    <property type="project" value="RGD"/>
</dbReference>
<dbReference type="GO" id="GO:0007186">
    <property type="term" value="P:G protein-coupled receptor signaling pathway"/>
    <property type="evidence" value="ECO:0000318"/>
    <property type="project" value="GO_Central"/>
</dbReference>
<dbReference type="GO" id="GO:0002862">
    <property type="term" value="P:negative regulation of inflammatory response to antigenic stimulus"/>
    <property type="evidence" value="ECO:0000266"/>
    <property type="project" value="RGD"/>
</dbReference>
<dbReference type="GO" id="GO:0048709">
    <property type="term" value="P:oligodendrocyte differentiation"/>
    <property type="evidence" value="ECO:0000270"/>
    <property type="project" value="RGD"/>
</dbReference>
<dbReference type="CDD" id="cd15161">
    <property type="entry name" value="7tmA_GPR17"/>
    <property type="match status" value="1"/>
</dbReference>
<dbReference type="FunFam" id="1.20.1070.10:FF:000152">
    <property type="entry name" value="uracil nucleotide/cysteinyl leukotriene receptor"/>
    <property type="match status" value="1"/>
</dbReference>
<dbReference type="Gene3D" id="1.20.1070.10">
    <property type="entry name" value="Rhodopsin 7-helix transmembrane proteins"/>
    <property type="match status" value="1"/>
</dbReference>
<dbReference type="InterPro" id="IPR000276">
    <property type="entry name" value="GPCR_Rhodpsn"/>
</dbReference>
<dbReference type="InterPro" id="IPR017452">
    <property type="entry name" value="GPCR_Rhodpsn_7TM"/>
</dbReference>
<dbReference type="PANTHER" id="PTHR24232">
    <property type="entry name" value="G-PROTEIN COUPLED RECEPTOR"/>
    <property type="match status" value="1"/>
</dbReference>
<dbReference type="PANTHER" id="PTHR24232:SF44">
    <property type="entry name" value="URACIL NUCLEOTIDE_CYSTEINYL LEUKOTRIENE RECEPTOR"/>
    <property type="match status" value="1"/>
</dbReference>
<dbReference type="Pfam" id="PF00001">
    <property type="entry name" value="7tm_1"/>
    <property type="match status" value="1"/>
</dbReference>
<dbReference type="PRINTS" id="PR00237">
    <property type="entry name" value="GPCRRHODOPSN"/>
</dbReference>
<dbReference type="PRINTS" id="PR01157">
    <property type="entry name" value="P2YPURNOCPTR"/>
</dbReference>
<dbReference type="SUPFAM" id="SSF81321">
    <property type="entry name" value="Family A G protein-coupled receptor-like"/>
    <property type="match status" value="1"/>
</dbReference>
<dbReference type="PROSITE" id="PS00237">
    <property type="entry name" value="G_PROTEIN_RECEP_F1_1"/>
    <property type="match status" value="1"/>
</dbReference>
<dbReference type="PROSITE" id="PS50262">
    <property type="entry name" value="G_PROTEIN_RECEP_F1_2"/>
    <property type="match status" value="1"/>
</dbReference>
<accession>Q09QM4</accession>
<gene>
    <name evidence="6" type="primary">Gpr17</name>
</gene>
<comment type="function">
    <text evidence="3">Dual specificity receptor for uracil nucleotides and cysteinyl leukotrienes (CysLTs). Signals through G(i) and inhibition of adenylyl cyclase. May mediate brain damage by nucleotides and CysLTs following ischemia.</text>
</comment>
<comment type="subcellular location">
    <subcellularLocation>
        <location>Cell membrane</location>
        <topology evidence="4">Multi-pass membrane protein</topology>
    </subcellularLocation>
</comment>
<comment type="tissue specificity">
    <text evidence="3">Expressed in brain, kidney, and heart. Highest level in brain.</text>
</comment>
<comment type="induction">
    <text evidence="3">In brain areas affected by ischemia.</text>
</comment>
<comment type="miscellaneous">
    <text evidence="3">Administration of an antisense oligonucleotide specific for GPR17 significantly reduced brain damage following ischemia.</text>
</comment>
<comment type="similarity">
    <text evidence="2">Belongs to the G-protein coupled receptor 1 family.</text>
</comment>